<proteinExistence type="inferred from homology"/>
<sequence>MTKIKIVVIVGPTAVGKTALGISLAKAFNGEIISGDSQQVYRQLDIGTAKATQEEQEAAVHHLIDIREVTESYSAYDFVQDAQKAISDIVSRGKLPIIVGGTGLYLQSLLEGYHLGGQVDQEAVKAYRNELEQLDDHDLYERLQVNNITIEQVNRRRAIRALELAQFADELENAETAYEPLIIGLNDDRQVIYDRINQRVNRMLENGLLEEAKWLYEHYPTVQASRGIGYKELFPYFVGEMTLAEASDQLKQNTRRFAKRQLTWFRNRMAVSFTAITAPDYPQVVHDRVRDFLGQKEKS</sequence>
<organism>
    <name type="scientific">Streptococcus pyogenes serotype M5 (strain Manfredo)</name>
    <dbReference type="NCBI Taxonomy" id="160491"/>
    <lineage>
        <taxon>Bacteria</taxon>
        <taxon>Bacillati</taxon>
        <taxon>Bacillota</taxon>
        <taxon>Bacilli</taxon>
        <taxon>Lactobacillales</taxon>
        <taxon>Streptococcaceae</taxon>
        <taxon>Streptococcus</taxon>
    </lineage>
</organism>
<gene>
    <name evidence="1" type="primary">miaA</name>
    <name type="ordered locus">SpyM51085</name>
</gene>
<protein>
    <recommendedName>
        <fullName evidence="1">tRNA dimethylallyltransferase</fullName>
        <ecNumber evidence="1">2.5.1.75</ecNumber>
    </recommendedName>
    <alternativeName>
        <fullName evidence="1">Dimethylallyl diphosphate:tRNA dimethylallyltransferase</fullName>
        <shortName evidence="1">DMAPP:tRNA dimethylallyltransferase</shortName>
        <shortName evidence="1">DMATase</shortName>
    </alternativeName>
    <alternativeName>
        <fullName evidence="1">Isopentenyl-diphosphate:tRNA isopentenyltransferase</fullName>
        <shortName evidence="1">IPP transferase</shortName>
        <shortName evidence="1">IPPT</shortName>
        <shortName evidence="1">IPTase</shortName>
    </alternativeName>
</protein>
<feature type="chain" id="PRO_1000020672" description="tRNA dimethylallyltransferase">
    <location>
        <begin position="1"/>
        <end position="299"/>
    </location>
</feature>
<feature type="region of interest" description="Interaction with substrate tRNA" evidence="1">
    <location>
        <begin position="36"/>
        <end position="39"/>
    </location>
</feature>
<feature type="binding site" evidence="1">
    <location>
        <begin position="11"/>
        <end position="18"/>
    </location>
    <ligand>
        <name>ATP</name>
        <dbReference type="ChEBI" id="CHEBI:30616"/>
    </ligand>
</feature>
<feature type="binding site" evidence="1">
    <location>
        <begin position="13"/>
        <end position="18"/>
    </location>
    <ligand>
        <name>substrate</name>
    </ligand>
</feature>
<feature type="site" description="Interaction with substrate tRNA" evidence="1">
    <location>
        <position position="102"/>
    </location>
</feature>
<feature type="site" description="Interaction with substrate tRNA" evidence="1">
    <location>
        <position position="128"/>
    </location>
</feature>
<dbReference type="EC" id="2.5.1.75" evidence="1"/>
<dbReference type="EMBL" id="AM295007">
    <property type="protein sequence ID" value="CAM30411.1"/>
    <property type="molecule type" value="Genomic_DNA"/>
</dbReference>
<dbReference type="RefSeq" id="WP_002990117.1">
    <property type="nucleotide sequence ID" value="NC_009332.1"/>
</dbReference>
<dbReference type="SMR" id="A2REY5"/>
<dbReference type="KEGG" id="spf:SpyM51085"/>
<dbReference type="HOGENOM" id="CLU_032616_0_1_9"/>
<dbReference type="GO" id="GO:0005524">
    <property type="term" value="F:ATP binding"/>
    <property type="evidence" value="ECO:0007669"/>
    <property type="project" value="UniProtKB-UniRule"/>
</dbReference>
<dbReference type="GO" id="GO:0052381">
    <property type="term" value="F:tRNA dimethylallyltransferase activity"/>
    <property type="evidence" value="ECO:0007669"/>
    <property type="project" value="UniProtKB-UniRule"/>
</dbReference>
<dbReference type="GO" id="GO:0006400">
    <property type="term" value="P:tRNA modification"/>
    <property type="evidence" value="ECO:0007669"/>
    <property type="project" value="TreeGrafter"/>
</dbReference>
<dbReference type="Gene3D" id="3.40.50.300">
    <property type="entry name" value="P-loop containing nucleotide triphosphate hydrolases"/>
    <property type="match status" value="1"/>
</dbReference>
<dbReference type="HAMAP" id="MF_00185">
    <property type="entry name" value="IPP_trans"/>
    <property type="match status" value="1"/>
</dbReference>
<dbReference type="InterPro" id="IPR039657">
    <property type="entry name" value="Dimethylallyltransferase"/>
</dbReference>
<dbReference type="InterPro" id="IPR018022">
    <property type="entry name" value="IPT"/>
</dbReference>
<dbReference type="InterPro" id="IPR027417">
    <property type="entry name" value="P-loop_NTPase"/>
</dbReference>
<dbReference type="NCBIfam" id="TIGR00174">
    <property type="entry name" value="miaA"/>
    <property type="match status" value="1"/>
</dbReference>
<dbReference type="PANTHER" id="PTHR11088">
    <property type="entry name" value="TRNA DIMETHYLALLYLTRANSFERASE"/>
    <property type="match status" value="1"/>
</dbReference>
<dbReference type="PANTHER" id="PTHR11088:SF60">
    <property type="entry name" value="TRNA DIMETHYLALLYLTRANSFERASE"/>
    <property type="match status" value="1"/>
</dbReference>
<dbReference type="Pfam" id="PF01715">
    <property type="entry name" value="IPPT"/>
    <property type="match status" value="1"/>
</dbReference>
<dbReference type="SUPFAM" id="SSF52540">
    <property type="entry name" value="P-loop containing nucleoside triphosphate hydrolases"/>
    <property type="match status" value="2"/>
</dbReference>
<reference key="1">
    <citation type="journal article" date="2007" name="J. Bacteriol.">
        <title>Complete genome of acute rheumatic fever-associated serotype M5 Streptococcus pyogenes strain Manfredo.</title>
        <authorList>
            <person name="Holden M.T.G."/>
            <person name="Scott A."/>
            <person name="Cherevach I."/>
            <person name="Chillingworth T."/>
            <person name="Churcher C."/>
            <person name="Cronin A."/>
            <person name="Dowd L."/>
            <person name="Feltwell T."/>
            <person name="Hamlin N."/>
            <person name="Holroyd S."/>
            <person name="Jagels K."/>
            <person name="Moule S."/>
            <person name="Mungall K."/>
            <person name="Quail M.A."/>
            <person name="Price C."/>
            <person name="Rabbinowitsch E."/>
            <person name="Sharp S."/>
            <person name="Skelton J."/>
            <person name="Whitehead S."/>
            <person name="Barrell B.G."/>
            <person name="Kehoe M."/>
            <person name="Parkhill J."/>
        </authorList>
    </citation>
    <scope>NUCLEOTIDE SEQUENCE [LARGE SCALE GENOMIC DNA]</scope>
    <source>
        <strain>Manfredo</strain>
    </source>
</reference>
<evidence type="ECO:0000255" key="1">
    <source>
        <dbReference type="HAMAP-Rule" id="MF_00185"/>
    </source>
</evidence>
<keyword id="KW-0067">ATP-binding</keyword>
<keyword id="KW-0460">Magnesium</keyword>
<keyword id="KW-0547">Nucleotide-binding</keyword>
<keyword id="KW-0808">Transferase</keyword>
<keyword id="KW-0819">tRNA processing</keyword>
<comment type="function">
    <text evidence="1">Catalyzes the transfer of a dimethylallyl group onto the adenine at position 37 in tRNAs that read codons beginning with uridine, leading to the formation of N6-(dimethylallyl)adenosine (i(6)A).</text>
</comment>
<comment type="catalytic activity">
    <reaction evidence="1">
        <text>adenosine(37) in tRNA + dimethylallyl diphosphate = N(6)-dimethylallyladenosine(37) in tRNA + diphosphate</text>
        <dbReference type="Rhea" id="RHEA:26482"/>
        <dbReference type="Rhea" id="RHEA-COMP:10162"/>
        <dbReference type="Rhea" id="RHEA-COMP:10375"/>
        <dbReference type="ChEBI" id="CHEBI:33019"/>
        <dbReference type="ChEBI" id="CHEBI:57623"/>
        <dbReference type="ChEBI" id="CHEBI:74411"/>
        <dbReference type="ChEBI" id="CHEBI:74415"/>
        <dbReference type="EC" id="2.5.1.75"/>
    </reaction>
</comment>
<comment type="cofactor">
    <cofactor evidence="1">
        <name>Mg(2+)</name>
        <dbReference type="ChEBI" id="CHEBI:18420"/>
    </cofactor>
</comment>
<comment type="subunit">
    <text evidence="1">Monomer.</text>
</comment>
<comment type="similarity">
    <text evidence="1">Belongs to the IPP transferase family.</text>
</comment>
<name>MIAA_STRPG</name>
<accession>A2REY5</accession>